<protein>
    <recommendedName>
        <fullName>Glutathione S-transferase 2</fullName>
        <ecNumber>2.5.1.18</ecNumber>
    </recommendedName>
    <alternativeName>
        <fullName>GST class-phi member 2</fullName>
    </alternativeName>
</protein>
<name>GSTF2_POPEU</name>
<keyword id="KW-0903">Direct protein sequencing</keyword>
<keyword id="KW-1185">Reference proteome</keyword>
<keyword id="KW-0808">Transferase</keyword>
<reference evidence="5" key="1">
    <citation type="thesis" date="2006" institute="ICAT-FCUL" country="Portugal">
        <title>Molecular analysis of Populus euphratica Oliv. response to moderate heat stress.</title>
        <authorList>
            <person name="Ferreira S."/>
        </authorList>
    </citation>
    <scope>PROTEIN SEQUENCE</scope>
    <source>
        <tissue evidence="3">Leaf</tissue>
    </source>
</reference>
<feature type="chain" id="PRO_0000304518" description="Glutathione S-transferase 2">
    <location>
        <begin position="1" status="less than"/>
        <end position="38" status="greater than"/>
    </location>
</feature>
<feature type="non-consecutive residues" evidence="4">
    <location>
        <begin position="11"/>
        <end position="12"/>
    </location>
</feature>
<feature type="non-consecutive residues" evidence="4">
    <location>
        <begin position="19"/>
        <end position="20"/>
    </location>
</feature>
<feature type="non-consecutive residues" evidence="4">
    <location>
        <begin position="27"/>
        <end position="28"/>
    </location>
</feature>
<feature type="non-terminal residue" evidence="4">
    <location>
        <position position="1"/>
    </location>
</feature>
<feature type="non-terminal residue" evidence="4">
    <location>
        <position position="38"/>
    </location>
</feature>
<proteinExistence type="evidence at protein level"/>
<sequence length="38" mass="4519">LGKLLDVYESRLLDVYESRVLDIYESRLGKVLDIYESR</sequence>
<dbReference type="EC" id="2.5.1.18"/>
<dbReference type="Proteomes" id="UP000694918">
    <property type="component" value="Unplaced"/>
</dbReference>
<dbReference type="GO" id="GO:0004364">
    <property type="term" value="F:glutathione transferase activity"/>
    <property type="evidence" value="ECO:0007669"/>
    <property type="project" value="UniProtKB-EC"/>
</dbReference>
<comment type="function">
    <text evidence="1">Conjugation of reduced glutathione to a wide number of exogenous and endogenous hydrophobic electrophiles. In plants, may have a detoxification role against certain herbicides (By similarity).</text>
</comment>
<comment type="catalytic activity">
    <reaction evidence="1">
        <text>RX + glutathione = an S-substituted glutathione + a halide anion + H(+)</text>
        <dbReference type="Rhea" id="RHEA:16437"/>
        <dbReference type="ChEBI" id="CHEBI:15378"/>
        <dbReference type="ChEBI" id="CHEBI:16042"/>
        <dbReference type="ChEBI" id="CHEBI:17792"/>
        <dbReference type="ChEBI" id="CHEBI:57925"/>
        <dbReference type="ChEBI" id="CHEBI:90779"/>
        <dbReference type="EC" id="2.5.1.18"/>
    </reaction>
</comment>
<comment type="similarity">
    <text evidence="2">Belongs to the GST superfamily. Phi family.</text>
</comment>
<comment type="caution">
    <text evidence="3">The order of the peptides shown is unknown.</text>
</comment>
<organism>
    <name type="scientific">Populus euphratica</name>
    <name type="common">Euphrates poplar</name>
    <dbReference type="NCBI Taxonomy" id="75702"/>
    <lineage>
        <taxon>Eukaryota</taxon>
        <taxon>Viridiplantae</taxon>
        <taxon>Streptophyta</taxon>
        <taxon>Embryophyta</taxon>
        <taxon>Tracheophyta</taxon>
        <taxon>Spermatophyta</taxon>
        <taxon>Magnoliopsida</taxon>
        <taxon>eudicotyledons</taxon>
        <taxon>Gunneridae</taxon>
        <taxon>Pentapetalae</taxon>
        <taxon>rosids</taxon>
        <taxon>fabids</taxon>
        <taxon>Malpighiales</taxon>
        <taxon>Salicaceae</taxon>
        <taxon>Saliceae</taxon>
        <taxon>Populus</taxon>
    </lineage>
</organism>
<evidence type="ECO:0000250" key="1">
    <source>
        <dbReference type="UniProtKB" id="P42760"/>
    </source>
</evidence>
<evidence type="ECO:0000255" key="2"/>
<evidence type="ECO:0000269" key="3">
    <source ref="1"/>
</evidence>
<evidence type="ECO:0000303" key="4">
    <source ref="1"/>
</evidence>
<evidence type="ECO:0000305" key="5"/>
<accession>P84984</accession>